<comment type="caution">
    <text evidence="3">Could be the product of a pseudogene. The gene coding for this protein is interrupted by a IS3B element between amino acids 486 and 487.</text>
</comment>
<dbReference type="EMBL" id="U73857">
    <property type="protein sequence ID" value="AAB18094.1"/>
    <property type="status" value="ALT_SEQ"/>
    <property type="molecule type" value="Genomic_DNA"/>
</dbReference>
<dbReference type="EMBL" id="U73857">
    <property type="protein sequence ID" value="AAB18097.1"/>
    <property type="status" value="ALT_SEQ"/>
    <property type="molecule type" value="Genomic_DNA"/>
</dbReference>
<dbReference type="EMBL" id="U00096">
    <property type="status" value="NOT_ANNOTATED_CDS"/>
    <property type="molecule type" value="Genomic_DNA"/>
</dbReference>
<dbReference type="EMBL" id="AP009048">
    <property type="protein sequence ID" value="BAE76152.1"/>
    <property type="status" value="ALT_SEQ"/>
    <property type="molecule type" value="Genomic_DNA"/>
</dbReference>
<dbReference type="EMBL" id="AP009048">
    <property type="protein sequence ID" value="BAE76155.1"/>
    <property type="status" value="ALT_SEQ"/>
    <property type="molecule type" value="Genomic_DNA"/>
</dbReference>
<dbReference type="PIR" id="C64765">
    <property type="entry name" value="C64765"/>
</dbReference>
<dbReference type="PIR" id="F64765">
    <property type="entry name" value="F64765"/>
</dbReference>
<dbReference type="RefSeq" id="WP_000556441.1">
    <property type="nucleotide sequence ID" value="NZ_CP014272.1"/>
</dbReference>
<dbReference type="SMR" id="P77199"/>
<dbReference type="BioGRID" id="4259480">
    <property type="interactions" value="311"/>
</dbReference>
<dbReference type="BioGRID" id="4259820">
    <property type="interactions" value="219"/>
</dbReference>
<dbReference type="FunCoup" id="P77199">
    <property type="interactions" value="65"/>
</dbReference>
<dbReference type="IntAct" id="P77199">
    <property type="interactions" value="1"/>
</dbReference>
<dbReference type="KEGG" id="ecj:JW0362"/>
<dbReference type="KEGG" id="ecj:JW5051"/>
<dbReference type="KEGG" id="ecoc:C3026_01800"/>
<dbReference type="EchoBASE" id="EB3373"/>
<dbReference type="eggNOG" id="COG3468">
    <property type="taxonomic scope" value="Bacteria"/>
</dbReference>
<dbReference type="HOGENOM" id="CLU_031789_2_1_6"/>
<dbReference type="InParanoid" id="P77199"/>
<dbReference type="PhylomeDB" id="P77199"/>
<dbReference type="Proteomes" id="UP000000625">
    <property type="component" value="Chromosome"/>
</dbReference>
<dbReference type="GO" id="GO:0019867">
    <property type="term" value="C:outer membrane"/>
    <property type="evidence" value="ECO:0007669"/>
    <property type="project" value="InterPro"/>
</dbReference>
<dbReference type="Gene3D" id="2.40.128.130">
    <property type="entry name" value="Autotransporter beta-domain"/>
    <property type="match status" value="1"/>
</dbReference>
<dbReference type="InterPro" id="IPR005546">
    <property type="entry name" value="Autotransporte_beta"/>
</dbReference>
<dbReference type="InterPro" id="IPR036709">
    <property type="entry name" value="Autotransporte_beta_dom_sf"/>
</dbReference>
<dbReference type="InterPro" id="IPR051551">
    <property type="entry name" value="Autotransporter_adhesion"/>
</dbReference>
<dbReference type="InterPro" id="IPR006315">
    <property type="entry name" value="OM_autotransptr_brl_dom"/>
</dbReference>
<dbReference type="InterPro" id="IPR011050">
    <property type="entry name" value="Pectin_lyase_fold/virulence"/>
</dbReference>
<dbReference type="InterPro" id="IPR004899">
    <property type="entry name" value="Pertactin_central"/>
</dbReference>
<dbReference type="InterPro" id="IPR003991">
    <property type="entry name" value="Pertactin_virulence_factor"/>
</dbReference>
<dbReference type="NCBIfam" id="TIGR01414">
    <property type="entry name" value="autotrans_barl"/>
    <property type="match status" value="1"/>
</dbReference>
<dbReference type="PANTHER" id="PTHR35037:SF2">
    <property type="match status" value="1"/>
</dbReference>
<dbReference type="PANTHER" id="PTHR35037">
    <property type="entry name" value="C-TERMINAL REGION OF AIDA-LIKE PROTEIN"/>
    <property type="match status" value="1"/>
</dbReference>
<dbReference type="Pfam" id="PF03797">
    <property type="entry name" value="Autotransporter"/>
    <property type="match status" value="1"/>
</dbReference>
<dbReference type="Pfam" id="PF03212">
    <property type="entry name" value="Pertactin"/>
    <property type="match status" value="1"/>
</dbReference>
<dbReference type="PRINTS" id="PR01484">
    <property type="entry name" value="PRTACTNFAMLY"/>
</dbReference>
<dbReference type="SMART" id="SM00869">
    <property type="entry name" value="Autotransporter"/>
    <property type="match status" value="1"/>
</dbReference>
<dbReference type="SUPFAM" id="SSF103515">
    <property type="entry name" value="Autotransporter"/>
    <property type="match status" value="1"/>
</dbReference>
<dbReference type="SUPFAM" id="SSF51126">
    <property type="entry name" value="Pectin lyase-like"/>
    <property type="match status" value="1"/>
</dbReference>
<dbReference type="PROSITE" id="PS51208">
    <property type="entry name" value="AUTOTRANSPORTER"/>
    <property type="match status" value="1"/>
</dbReference>
<keyword id="KW-1185">Reference proteome</keyword>
<keyword id="KW-0732">Signal</keyword>
<gene>
    <name type="primary">yaiT</name>
    <name type="ordered locus">b4580</name>
    <name type="ordered locus">JW0362/JW5051</name>
    <name type="ORF">b0371</name>
    <name type="ORF">b0374</name>
</gene>
<reference key="1">
    <citation type="submission" date="1997-01" db="EMBL/GenBank/DDBJ databases">
        <title>Sequence of minutes 4-25 of Escherichia coli.</title>
        <authorList>
            <person name="Chung E."/>
            <person name="Allen E."/>
            <person name="Araujo R."/>
            <person name="Aparicio A.M."/>
            <person name="Davis K."/>
            <person name="Duncan M."/>
            <person name="Federspiel N."/>
            <person name="Hyman R."/>
            <person name="Kalman S."/>
            <person name="Komp C."/>
            <person name="Kurdi O."/>
            <person name="Lew H."/>
            <person name="Lin D."/>
            <person name="Namath A."/>
            <person name="Oefner P."/>
            <person name="Roberts D."/>
            <person name="Schramm S."/>
            <person name="Davis R.W."/>
        </authorList>
    </citation>
    <scope>NUCLEOTIDE SEQUENCE [LARGE SCALE GENOMIC DNA]</scope>
    <source>
        <strain>K12 / MG1655 / ATCC 47076</strain>
    </source>
</reference>
<reference key="2">
    <citation type="journal article" date="1997" name="Science">
        <title>The complete genome sequence of Escherichia coli K-12.</title>
        <authorList>
            <person name="Blattner F.R."/>
            <person name="Plunkett G. III"/>
            <person name="Bloch C.A."/>
            <person name="Perna N.T."/>
            <person name="Burland V."/>
            <person name="Riley M."/>
            <person name="Collado-Vides J."/>
            <person name="Glasner J.D."/>
            <person name="Rode C.K."/>
            <person name="Mayhew G.F."/>
            <person name="Gregor J."/>
            <person name="Davis N.W."/>
            <person name="Kirkpatrick H.A."/>
            <person name="Goeden M.A."/>
            <person name="Rose D.J."/>
            <person name="Mau B."/>
            <person name="Shao Y."/>
        </authorList>
    </citation>
    <scope>NUCLEOTIDE SEQUENCE [LARGE SCALE GENOMIC DNA]</scope>
    <source>
        <strain>K12 / MG1655 / ATCC 47076</strain>
    </source>
</reference>
<reference key="3">
    <citation type="journal article" date="2006" name="Mol. Syst. Biol.">
        <title>Highly accurate genome sequences of Escherichia coli K-12 strains MG1655 and W3110.</title>
        <authorList>
            <person name="Hayashi K."/>
            <person name="Morooka N."/>
            <person name="Yamamoto Y."/>
            <person name="Fujita K."/>
            <person name="Isono K."/>
            <person name="Choi S."/>
            <person name="Ohtsubo E."/>
            <person name="Baba T."/>
            <person name="Wanner B.L."/>
            <person name="Mori H."/>
            <person name="Horiuchi T."/>
        </authorList>
    </citation>
    <scope>NUCLEOTIDE SEQUENCE [LARGE SCALE GENOMIC DNA]</scope>
    <source>
        <strain>K12 / W3110 / ATCC 27325 / DSM 5911</strain>
    </source>
</reference>
<organism>
    <name type="scientific">Escherichia coli (strain K12)</name>
    <dbReference type="NCBI Taxonomy" id="83333"/>
    <lineage>
        <taxon>Bacteria</taxon>
        <taxon>Pseudomonadati</taxon>
        <taxon>Pseudomonadota</taxon>
        <taxon>Gammaproteobacteria</taxon>
        <taxon>Enterobacterales</taxon>
        <taxon>Enterobacteriaceae</taxon>
        <taxon>Escherichia</taxon>
    </lineage>
</organism>
<name>YAIT_ECOLI</name>
<feature type="signal peptide" evidence="1">
    <location>
        <begin position="1"/>
        <end position="27"/>
    </location>
</feature>
<feature type="chain" id="PRO_0000002711" description="Putative uncharacterized protein YaiT">
    <location>
        <begin position="28"/>
        <end position="968"/>
    </location>
</feature>
<feature type="domain" description="Autotransporter" evidence="2">
    <location>
        <begin position="703"/>
        <end position="968"/>
    </location>
</feature>
<proteinExistence type="uncertain"/>
<evidence type="ECO:0000255" key="1"/>
<evidence type="ECO:0000255" key="2">
    <source>
        <dbReference type="PROSITE-ProRule" id="PRU00556"/>
    </source>
</evidence>
<evidence type="ECO:0000305" key="3"/>
<protein>
    <recommendedName>
        <fullName>Putative uncharacterized protein YaiT</fullName>
    </recommendedName>
</protein>
<accession>P77199</accession>
<accession>P71312</accession>
<accession>P75700</accession>
<accession>Q2MC51</accession>
<accession>Q2MC54</accession>
<sequence>MHSWKKKLVVSQLALACTLAITSQANAANYDTWTYIDNPVTALDWDHMDKAGTVDGNYVNYSGFVYYNNTNGDFDQSFNGDTVNGTISTYYLNHDYADSTANQLDISNSVIHGSITSMLPGGYYDRFDADGNNLGGYDFYTDAVVDTHWRDGDVFTLNIANTTIDDDYEALYFTDSYKDGDVTKHTNETFDTSEGVAVNLDVESNINISNNSRVAGIALSQGNTYNETYTTESHTWDNNISVKDSTVTSGSNYILDSNTYGKTGHFGNSDEPSDYAGPGDVAMSFTASGSDYAMKNNVFLSNSTLMGDVAFTSTWNSNFDPNGHDSNGDGVKDTNGGWTDDSLNVDELNLTLDNGSKWVGQAIYNVAETSAMYDVATNSLTPDATYENNDWKRVVDDKVFQSGVFNVALNNGSEWDTTGRSIVDTLTVNNGSQVNVSESKLTSDTIDLTNGSSLNIGEDGYVDTDHLTINSYSTVALTESTGWGADYNLYANTITVTNGGVLDVNVDQFDTEAFRTDKLELTSGNIADHNGNVVSGVFDIHSSDYVLNADLVNDRTWDTSKSNYGYGIVAMNSDGHLTINGNGDVDNGTELDNSSVDNVVAATGNYKVRIDNATGAGAIADYKDKEIIYVNDVNSNATFSAANKADLGAYTYQAEQRGNTVVLQQMELTDYANMALSIPSANTNIWNLEQDTVGTRLTNSRHGLADNGGAWVSYFGGNFNGDNGTINYDQDVNGIMVGVDTKIDGNNAKWIVGAAAGFAKGDMNDRSGQVDQDSQTAYIYSSAHFANNVFVDGSLSYSHFNNDLSATMSNGTYVDGSTNSDAWGFGLKAGYDFKLGDAGYVTPYGSVSGLFQSGDDYQLSNDMKVDGQSYDSMRYELGVDAGYTFTYSEDQALTPYFKLAYVYDDSNNDNDVNGDSIDNGTEGSAVRVGLGTQFSFTKNFSAYTDANYLGGGDVDQDWSANVGVKYTW</sequence>